<feature type="chain" id="PRO_0000203241" description="Ubiquitin ligase-binding protein BUL2">
    <location>
        <begin position="1"/>
        <end position="920"/>
    </location>
</feature>
<feature type="region of interest" description="Disordered" evidence="1">
    <location>
        <begin position="1"/>
        <end position="89"/>
    </location>
</feature>
<feature type="short sequence motif" description="PY-motif">
    <location>
        <begin position="129"/>
        <end position="133"/>
    </location>
</feature>
<feature type="compositionally biased region" description="Polar residues" evidence="1">
    <location>
        <begin position="1"/>
        <end position="10"/>
    </location>
</feature>
<feature type="compositionally biased region" description="Polar residues" evidence="1">
    <location>
        <begin position="35"/>
        <end position="57"/>
    </location>
</feature>
<feature type="compositionally biased region" description="Basic and acidic residues" evidence="1">
    <location>
        <begin position="73"/>
        <end position="82"/>
    </location>
</feature>
<feature type="modified residue" description="Phosphothreonine" evidence="16">
    <location>
        <position position="22"/>
    </location>
</feature>
<feature type="modified residue" description="Phosphoserine" evidence="15">
    <location>
        <position position="557"/>
    </location>
</feature>
<sequence>MTFTFSTSSRKNGRPPLKSVSTEDNIHLLRKRRQQQLSSNSTDNSLHPNSGQTPRASDSQDDDIRSASTTNLDRLRQEREENSLEMDCTQSRLSHRANMLVDVLPSFEMYNALHRHIPQGNVDPDRHDFPPSYQEVRTQRMTILPSNDNSVERSQLTAVPGSENACNNATAHSLTNLHPLQTQHLTINSTRSGGQSLHSSSDTNISQIPFEDDLNDSDNIFIDKLYTLPKLSTPIEIDIRITKTASIPHERPEEQSILKEYTSGDIIHGYCLIENRSSQPLKFEMFYVTLEAYISVIDRQKGKRTLKRFLRMVDLSASWSYTNITPSTGINIVPGERDFDDAIIGLSNSRELKPNTKYKKFFMFKLPTQLLDVTCKQEQFSHCLLPPSFGIDKYKNNCKYSGIKVNSVLGCGHLGTKGSPILTLDMADDNLSINYTIDAKIVGKDKRTSKLNIMKEKEYNLRVMPFPFAGVTNQQNEKTCLRQLKNLESLIEDRFEALNKIFKKLELNEAISNVDIHDTDISGTLDGNEDLDSDEILRRKLDQLHINNRIDDTASQSPSYDSKNMAPKENLVETELRYKFKNKNKSNSSLFSHFLSSSETGSSSTGPHVYNSGLIVLSVKKPQSTLPYWSPSLLRKTNKFEAKSEQEKENWQRLMGMLPEGVKTPLTKLDVHLTCIQSNNSAGHKPPEISSVTTEFVVITAKSDNSIPIKFCTELLMNENRLNKLKTKFLTYQKKVHEYRKKFEENHAKLNELYNRNRDHFTPKELLFTNFISDQINNDIDSLAGLKVNIIDLHDIFKKQIHTFEEENEDIISKKGSSNPPSASSSNNNFLQATFSNGASTATKFTQQIVHEWEKVKPLQYKRDVTVNLKLNPNIKETLVPNLETCLCCRFYCVRVNIKFDNHLGSMKVDIPVDVKKLQI</sequence>
<accession>Q03758</accession>
<accession>D6W0H3</accession>
<proteinExistence type="evidence at protein level"/>
<protein>
    <recommendedName>
        <fullName>Ubiquitin ligase-binding protein BUL2</fullName>
    </recommendedName>
</protein>
<gene>
    <name type="primary">BUL2</name>
    <name type="ordered locus">YML111W</name>
    <name type="ORF">YM8339.08</name>
</gene>
<reference key="1">
    <citation type="journal article" date="1997" name="Nature">
        <title>The nucleotide sequence of Saccharomyces cerevisiae chromosome XIII.</title>
        <authorList>
            <person name="Bowman S."/>
            <person name="Churcher C.M."/>
            <person name="Badcock K."/>
            <person name="Brown D."/>
            <person name="Chillingworth T."/>
            <person name="Connor R."/>
            <person name="Dedman K."/>
            <person name="Devlin K."/>
            <person name="Gentles S."/>
            <person name="Hamlin N."/>
            <person name="Hunt S."/>
            <person name="Jagels K."/>
            <person name="Lye G."/>
            <person name="Moule S."/>
            <person name="Odell C."/>
            <person name="Pearson D."/>
            <person name="Rajandream M.A."/>
            <person name="Rice P."/>
            <person name="Skelton J."/>
            <person name="Walsh S.V."/>
            <person name="Whitehead S."/>
            <person name="Barrell B.G."/>
        </authorList>
    </citation>
    <scope>NUCLEOTIDE SEQUENCE [LARGE SCALE GENOMIC DNA]</scope>
    <source>
        <strain>ATCC 204508 / S288c</strain>
    </source>
</reference>
<reference key="2">
    <citation type="journal article" date="2014" name="G3 (Bethesda)">
        <title>The reference genome sequence of Saccharomyces cerevisiae: Then and now.</title>
        <authorList>
            <person name="Engel S.R."/>
            <person name="Dietrich F.S."/>
            <person name="Fisk D.G."/>
            <person name="Binkley G."/>
            <person name="Balakrishnan R."/>
            <person name="Costanzo M.C."/>
            <person name="Dwight S.S."/>
            <person name="Hitz B.C."/>
            <person name="Karra K."/>
            <person name="Nash R.S."/>
            <person name="Weng S."/>
            <person name="Wong E.D."/>
            <person name="Lloyd P."/>
            <person name="Skrzypek M.S."/>
            <person name="Miyasato S.R."/>
            <person name="Simison M."/>
            <person name="Cherry J.M."/>
        </authorList>
    </citation>
    <scope>GENOME REANNOTATION</scope>
    <source>
        <strain>ATCC 204508 / S288c</strain>
    </source>
</reference>
<reference key="3">
    <citation type="journal article" date="1998" name="Gene">
        <title>The PY-motif of Bul1 protein is essential for growth of Saccharomyces cerevisiae under various stress conditions.</title>
        <authorList>
            <person name="Yashiroda H."/>
            <person name="Kaida D."/>
            <person name="Toh-e A."/>
            <person name="Kikuchi Y."/>
        </authorList>
    </citation>
    <scope>FUNCTION</scope>
    <scope>DOMAIN</scope>
    <scope>INTERACTION WITH RSP5</scope>
</reference>
<reference key="4">
    <citation type="journal article" date="2000" name="Mol. Cell. Biol.">
        <title>Yeast glycogen synthase kinase 3 is involved in protein degradation in cooperation with Bul1, Bul2, and Rsp5.</title>
        <authorList>
            <person name="Andoh T."/>
            <person name="Hirata Y."/>
            <person name="Kikuchi A."/>
        </authorList>
    </citation>
    <scope>FUNCTION</scope>
</reference>
<reference key="5">
    <citation type="journal article" date="2001" name="J. Biol. Chem.">
        <title>Ubiquitin is required for sorting to the vacuole of the yeast general amino acid permease, Gap1.</title>
        <authorList>
            <person name="Soetens O."/>
            <person name="De Craene J.-O."/>
            <person name="Andre B."/>
        </authorList>
    </citation>
    <scope>FUNCTION</scope>
</reference>
<reference key="6">
    <citation type="journal article" date="2001" name="J. Cell Biol.">
        <title>Components of a ubiquitin ligase complex specify polyubiquitination and intracellular trafficking of the general amino acid permease.</title>
        <authorList>
            <person name="Helliwell S.B."/>
            <person name="Losko S."/>
            <person name="Kaiser C.A."/>
        </authorList>
    </citation>
    <scope>FUNCTION</scope>
</reference>
<reference key="7">
    <citation type="journal article" date="2003" name="Biochem. Biophys. Res. Commun.">
        <title>Rsp5-Bul1/2 complex is necessary for the HSE-mediated gene expression in budding yeast.</title>
        <authorList>
            <person name="Kaida D."/>
            <person name="Toh-e A."/>
            <person name="Kikuchi Y."/>
        </authorList>
    </citation>
    <scope>FUNCTION OF THE RSP5-BUL1/2 COMPLEX</scope>
</reference>
<reference key="8">
    <citation type="journal article" date="2003" name="Mol. Cell. Biol.">
        <title>Pressure-induced differential regulation of the two tryptophan permeases Tat1 and Tat2 by ubiquitin ligase Rsp5 and its binding proteins, Bul1 and Bul2.</title>
        <authorList>
            <person name="Abe F."/>
            <person name="Iida H."/>
        </authorList>
    </citation>
    <scope>FUNCTION OF THE RSP5-BUL1/2 COMPLEX</scope>
</reference>
<reference key="9">
    <citation type="journal article" date="2003" name="Nature">
        <title>Global analysis of protein localization in budding yeast.</title>
        <authorList>
            <person name="Huh W.-K."/>
            <person name="Falvo J.V."/>
            <person name="Gerke L.C."/>
            <person name="Carroll A.S."/>
            <person name="Howson R.W."/>
            <person name="Weissman J.S."/>
            <person name="O'Shea E.K."/>
        </authorList>
    </citation>
    <scope>SUBCELLULAR LOCATION [LARGE SCALE ANALYSIS]</scope>
</reference>
<reference key="10">
    <citation type="journal article" date="2003" name="Nature">
        <title>Global analysis of protein expression in yeast.</title>
        <authorList>
            <person name="Ghaemmaghami S."/>
            <person name="Huh W.-K."/>
            <person name="Bower K."/>
            <person name="Howson R.W."/>
            <person name="Belle A."/>
            <person name="Dephoure N."/>
            <person name="O'Shea E.K."/>
            <person name="Weissman J.S."/>
        </authorList>
    </citation>
    <scope>LEVEL OF PROTEIN EXPRESSION [LARGE SCALE ANALYSIS]</scope>
</reference>
<reference key="11">
    <citation type="journal article" date="2004" name="J. Biol. Chem.">
        <title>Genetic, biochemical, and transcriptional responses of Saccharomyces cerevisiae to the novel immunomodulator FTY720 largely mimic those of the natural sphingolipid phytosphingosine.</title>
        <authorList>
            <person name="Welsch C.A."/>
            <person name="Roth L.W.A."/>
            <person name="Goetschy J.F."/>
            <person name="Movva N.R."/>
        </authorList>
    </citation>
    <scope>FUNCTION</scope>
</reference>
<reference key="12">
    <citation type="journal article" date="2004" name="J. Biol. Chem.">
        <title>NPR1 kinase and RSP5-BUL1/2 ubiquitin ligase control GLN3-dependent transcription in Saccharomyces cerevisiae.</title>
        <authorList>
            <person name="Crespo J.L."/>
            <person name="Helliwell S.B."/>
            <person name="Wiederkehr C."/>
            <person name="Demougin P."/>
            <person name="Fowler B."/>
            <person name="Primig M."/>
            <person name="Hall M.N."/>
        </authorList>
    </citation>
    <scope>FUNCTION OF THE RSP5-BUL1/2 COMPLEX</scope>
</reference>
<reference key="13">
    <citation type="journal article" date="2004" name="Mol. Biol. Cell">
        <title>Ubiquitin-mediated targeting of a mutant plasma membrane ATPase, Pma1-7, to the endosomal/vacuolar system in yeast.</title>
        <authorList>
            <person name="Pizzirusso M."/>
            <person name="Chang A."/>
        </authorList>
    </citation>
    <scope>FUNCTION OF THE RSP5-BUL1/2 COMPLEX</scope>
</reference>
<reference key="14">
    <citation type="journal article" date="2006" name="J. Biol. Chem.">
        <title>Transduction of the nitrogen signal activating Gln3-mediated transcription is independent of Npr1 kinase and Rsp5-Bul1/2 ubiquitin ligase in Saccharomyces cerevisiae.</title>
        <authorList>
            <person name="Feller A."/>
            <person name="Boeckstaens M."/>
            <person name="Marini A.-M."/>
            <person name="Dubois E."/>
        </authorList>
    </citation>
    <scope>FUNCTION OF THE RSP5-BUL1/2 COMPLEX</scope>
</reference>
<reference key="15">
    <citation type="journal article" date="2007" name="J. Proteome Res.">
        <title>Large-scale phosphorylation analysis of alpha-factor-arrested Saccharomyces cerevisiae.</title>
        <authorList>
            <person name="Li X."/>
            <person name="Gerber S.A."/>
            <person name="Rudner A.D."/>
            <person name="Beausoleil S.A."/>
            <person name="Haas W."/>
            <person name="Villen J."/>
            <person name="Elias J.E."/>
            <person name="Gygi S.P."/>
        </authorList>
    </citation>
    <scope>PHOSPHORYLATION [LARGE SCALE ANALYSIS] AT SER-557</scope>
    <scope>IDENTIFICATION BY MASS SPECTROMETRY [LARGE SCALE ANALYSIS]</scope>
    <source>
        <strain>ADR376</strain>
    </source>
</reference>
<reference key="16">
    <citation type="journal article" date="2008" name="Mol. Cell. Proteomics">
        <title>A multidimensional chromatography technology for in-depth phosphoproteome analysis.</title>
        <authorList>
            <person name="Albuquerque C.P."/>
            <person name="Smolka M.B."/>
            <person name="Payne S.H."/>
            <person name="Bafna V."/>
            <person name="Eng J."/>
            <person name="Zhou H."/>
        </authorList>
    </citation>
    <scope>IDENTIFICATION BY MASS SPECTROMETRY [LARGE SCALE ANALYSIS]</scope>
</reference>
<reference key="17">
    <citation type="journal article" date="2009" name="Science">
        <title>Global analysis of Cdk1 substrate phosphorylation sites provides insights into evolution.</title>
        <authorList>
            <person name="Holt L.J."/>
            <person name="Tuch B.B."/>
            <person name="Villen J."/>
            <person name="Johnson A.D."/>
            <person name="Gygi S.P."/>
            <person name="Morgan D.O."/>
        </authorList>
    </citation>
    <scope>PHOSPHORYLATION [LARGE SCALE ANALYSIS] AT THR-22</scope>
    <scope>IDENTIFICATION BY MASS SPECTROMETRY [LARGE SCALE ANALYSIS]</scope>
</reference>
<evidence type="ECO:0000256" key="1">
    <source>
        <dbReference type="SAM" id="MobiDB-lite"/>
    </source>
</evidence>
<evidence type="ECO:0000269" key="2">
    <source>
    </source>
</evidence>
<evidence type="ECO:0000269" key="3">
    <source>
    </source>
</evidence>
<evidence type="ECO:0000269" key="4">
    <source>
    </source>
</evidence>
<evidence type="ECO:0000269" key="5">
    <source>
    </source>
</evidence>
<evidence type="ECO:0000269" key="6">
    <source>
    </source>
</evidence>
<evidence type="ECO:0000269" key="7">
    <source>
    </source>
</evidence>
<evidence type="ECO:0000269" key="8">
    <source>
    </source>
</evidence>
<evidence type="ECO:0000269" key="9">
    <source>
    </source>
</evidence>
<evidence type="ECO:0000269" key="10">
    <source>
    </source>
</evidence>
<evidence type="ECO:0000269" key="11">
    <source>
    </source>
</evidence>
<evidence type="ECO:0000269" key="12">
    <source>
    </source>
</evidence>
<evidence type="ECO:0000269" key="13">
    <source>
    </source>
</evidence>
<evidence type="ECO:0000305" key="14"/>
<evidence type="ECO:0007744" key="15">
    <source>
    </source>
</evidence>
<evidence type="ECO:0007744" key="16">
    <source>
    </source>
</evidence>
<name>BUL2_YEAST</name>
<keyword id="KW-0963">Cytoplasm</keyword>
<keyword id="KW-0597">Phosphoprotein</keyword>
<keyword id="KW-1185">Reference proteome</keyword>
<keyword id="KW-0833">Ubl conjugation pathway</keyword>
<dbReference type="EMBL" id="Z49210">
    <property type="protein sequence ID" value="CAA89107.1"/>
    <property type="molecule type" value="Genomic_DNA"/>
</dbReference>
<dbReference type="EMBL" id="BK006946">
    <property type="protein sequence ID" value="DAA09787.1"/>
    <property type="molecule type" value="Genomic_DNA"/>
</dbReference>
<dbReference type="PIR" id="S53961">
    <property type="entry name" value="S53961"/>
</dbReference>
<dbReference type="RefSeq" id="NP_013596.1">
    <property type="nucleotide sequence ID" value="NM_001182473.1"/>
</dbReference>
<dbReference type="BioGRID" id="35093">
    <property type="interactions" value="256"/>
</dbReference>
<dbReference type="ComplexPortal" id="CPX-2923">
    <property type="entry name" value="RSP5-BUL2 ubiquitin ligase complex"/>
</dbReference>
<dbReference type="DIP" id="DIP-2237N"/>
<dbReference type="FunCoup" id="Q03758">
    <property type="interactions" value="136"/>
</dbReference>
<dbReference type="IntAct" id="Q03758">
    <property type="interactions" value="19"/>
</dbReference>
<dbReference type="MINT" id="Q03758"/>
<dbReference type="STRING" id="4932.YML111W"/>
<dbReference type="GlyGen" id="Q03758">
    <property type="glycosylation" value="1 site"/>
</dbReference>
<dbReference type="iPTMnet" id="Q03758"/>
<dbReference type="PaxDb" id="4932-YML111W"/>
<dbReference type="PeptideAtlas" id="Q03758"/>
<dbReference type="EnsemblFungi" id="YML111W_mRNA">
    <property type="protein sequence ID" value="YML111W"/>
    <property type="gene ID" value="YML111W"/>
</dbReference>
<dbReference type="GeneID" id="854929"/>
<dbReference type="KEGG" id="sce:YML111W"/>
<dbReference type="AGR" id="SGD:S000004579"/>
<dbReference type="SGD" id="S000004579">
    <property type="gene designation" value="BUL2"/>
</dbReference>
<dbReference type="VEuPathDB" id="FungiDB:YML111W"/>
<dbReference type="eggNOG" id="ENOG502QSAC">
    <property type="taxonomic scope" value="Eukaryota"/>
</dbReference>
<dbReference type="GeneTree" id="ENSGT00940000176311"/>
<dbReference type="HOGENOM" id="CLU_010320_0_0_1"/>
<dbReference type="InParanoid" id="Q03758"/>
<dbReference type="OMA" id="FFTFKFP"/>
<dbReference type="OrthoDB" id="2283785at2759"/>
<dbReference type="BioCyc" id="YEAST:G3O-32693-MONOMER"/>
<dbReference type="UniPathway" id="UPA00143"/>
<dbReference type="BioGRID-ORCS" id="854929">
    <property type="hits" value="0 hits in 10 CRISPR screens"/>
</dbReference>
<dbReference type="PRO" id="PR:Q03758"/>
<dbReference type="Proteomes" id="UP000002311">
    <property type="component" value="Chromosome XIII"/>
</dbReference>
<dbReference type="RNAct" id="Q03758">
    <property type="molecule type" value="protein"/>
</dbReference>
<dbReference type="GO" id="GO:0005737">
    <property type="term" value="C:cytoplasm"/>
    <property type="evidence" value="ECO:0007005"/>
    <property type="project" value="SGD"/>
</dbReference>
<dbReference type="GO" id="GO:1990306">
    <property type="term" value="C:RSP5-BUL ubiquitin ligase complex"/>
    <property type="evidence" value="ECO:0000353"/>
    <property type="project" value="ComplexPortal"/>
</dbReference>
<dbReference type="GO" id="GO:0000151">
    <property type="term" value="C:ubiquitin ligase complex"/>
    <property type="evidence" value="ECO:0000315"/>
    <property type="project" value="SGD"/>
</dbReference>
<dbReference type="GO" id="GO:0034450">
    <property type="term" value="F:ubiquitin-ubiquitin ligase activity"/>
    <property type="evidence" value="ECO:0000316"/>
    <property type="project" value="SGD"/>
</dbReference>
<dbReference type="GO" id="GO:2000397">
    <property type="term" value="P:positive regulation of ubiquitin-dependent endocytosis"/>
    <property type="evidence" value="ECO:0000303"/>
    <property type="project" value="ComplexPortal"/>
</dbReference>
<dbReference type="GO" id="GO:0006513">
    <property type="term" value="P:protein monoubiquitination"/>
    <property type="evidence" value="ECO:0000315"/>
    <property type="project" value="SGD"/>
</dbReference>
<dbReference type="GO" id="GO:0000209">
    <property type="term" value="P:protein polyubiquitination"/>
    <property type="evidence" value="ECO:0000315"/>
    <property type="project" value="SGD"/>
</dbReference>
<dbReference type="GO" id="GO:0043162">
    <property type="term" value="P:ubiquitin-dependent protein catabolic process via the multivesicular body sorting pathway"/>
    <property type="evidence" value="ECO:0000303"/>
    <property type="project" value="ComplexPortal"/>
</dbReference>
<dbReference type="InterPro" id="IPR039634">
    <property type="entry name" value="Bul1-like"/>
</dbReference>
<dbReference type="InterPro" id="IPR022794">
    <property type="entry name" value="Bul1_C"/>
</dbReference>
<dbReference type="InterPro" id="IPR007519">
    <property type="entry name" value="Bul1_N"/>
</dbReference>
<dbReference type="PANTHER" id="PTHR31904">
    <property type="entry name" value="BYPASS OF STOP CODON PROTEIN 5-RELATED"/>
    <property type="match status" value="1"/>
</dbReference>
<dbReference type="PANTHER" id="PTHR31904:SF1">
    <property type="entry name" value="BYPASS OF STOP CODON PROTEIN 5-RELATED"/>
    <property type="match status" value="1"/>
</dbReference>
<dbReference type="Pfam" id="PF04426">
    <property type="entry name" value="Bul1_C"/>
    <property type="match status" value="1"/>
</dbReference>
<dbReference type="Pfam" id="PF04425">
    <property type="entry name" value="Bul1_N"/>
    <property type="match status" value="1"/>
</dbReference>
<comment type="function">
    <text evidence="2 3 4 5 6 9 10 11 12 13">Component of a RSP5 ubiquitin ligase complex which specifies polyubiquitination and intracellular trafficking of the general amino acid permease GAP1 as well as other permeases such as PMA1. The RSP5-BUL1/2 complex is also necessary for the heat-shock element (HSE)-mediated gene expression, nitrogen starvation GLN3-dependent transcription and pressure-induced differential regulation of the 2 tryptophan permeases TAT1 and TAT2.</text>
</comment>
<comment type="pathway">
    <text>Protein modification; protein ubiquitination.</text>
</comment>
<comment type="subunit">
    <text>Component of the RSP5-BUL1/2 ubiquitin ligase complex composed of at least RSP5 and BUL1 or BUL2.</text>
</comment>
<comment type="subcellular location">
    <subcellularLocation>
        <location evidence="7">Cytoplasm</location>
    </subcellularLocation>
</comment>
<comment type="domain">
    <text evidence="13">The PY-motif is required for the interaction with RSP5 ubiquitin-ligase and the HSE-mediated gene expression.</text>
</comment>
<comment type="miscellaneous">
    <text evidence="8">Present with 339 molecules/cell in log phase SD medium.</text>
</comment>
<comment type="similarity">
    <text evidence="14">Belongs to the BUL1 family.</text>
</comment>
<organism>
    <name type="scientific">Saccharomyces cerevisiae (strain ATCC 204508 / S288c)</name>
    <name type="common">Baker's yeast</name>
    <dbReference type="NCBI Taxonomy" id="559292"/>
    <lineage>
        <taxon>Eukaryota</taxon>
        <taxon>Fungi</taxon>
        <taxon>Dikarya</taxon>
        <taxon>Ascomycota</taxon>
        <taxon>Saccharomycotina</taxon>
        <taxon>Saccharomycetes</taxon>
        <taxon>Saccharomycetales</taxon>
        <taxon>Saccharomycetaceae</taxon>
        <taxon>Saccharomyces</taxon>
    </lineage>
</organism>